<dbReference type="EC" id="5.3.1.23" evidence="1"/>
<dbReference type="EMBL" id="AJ248287">
    <property type="protein sequence ID" value="CAB50246.1"/>
    <property type="molecule type" value="Genomic_DNA"/>
</dbReference>
<dbReference type="EMBL" id="HE613800">
    <property type="protein sequence ID" value="CCE70783.1"/>
    <property type="molecule type" value="Genomic_DNA"/>
</dbReference>
<dbReference type="PIR" id="A75044">
    <property type="entry name" value="A75044"/>
</dbReference>
<dbReference type="RefSeq" id="WP_010868456.1">
    <property type="nucleotide sequence ID" value="NC_000868.1"/>
</dbReference>
<dbReference type="SMR" id="Q9UZ16"/>
<dbReference type="STRING" id="272844.PAB2444"/>
<dbReference type="KEGG" id="pab:PAB2444"/>
<dbReference type="PATRIC" id="fig|272844.11.peg.1426"/>
<dbReference type="eggNOG" id="arCOG01123">
    <property type="taxonomic scope" value="Archaea"/>
</dbReference>
<dbReference type="HOGENOM" id="CLU_016218_1_2_2"/>
<dbReference type="OrthoDB" id="45195at2157"/>
<dbReference type="PhylomeDB" id="Q9UZ16"/>
<dbReference type="Proteomes" id="UP000000810">
    <property type="component" value="Chromosome"/>
</dbReference>
<dbReference type="Proteomes" id="UP000009139">
    <property type="component" value="Chromosome"/>
</dbReference>
<dbReference type="GO" id="GO:0046523">
    <property type="term" value="F:S-methyl-5-thioribose-1-phosphate isomerase activity"/>
    <property type="evidence" value="ECO:0007669"/>
    <property type="project" value="UniProtKB-UniRule"/>
</dbReference>
<dbReference type="GO" id="GO:0019509">
    <property type="term" value="P:L-methionine salvage from methylthioadenosine"/>
    <property type="evidence" value="ECO:0007669"/>
    <property type="project" value="UniProtKB-UniRule"/>
</dbReference>
<dbReference type="FunFam" id="1.20.120.420:FF:000001">
    <property type="entry name" value="Methylthioribose-1-phosphate isomerase"/>
    <property type="match status" value="1"/>
</dbReference>
<dbReference type="FunFam" id="3.40.50.10470:FF:000006">
    <property type="entry name" value="Methylthioribose-1-phosphate isomerase"/>
    <property type="match status" value="1"/>
</dbReference>
<dbReference type="Gene3D" id="1.20.120.420">
    <property type="entry name" value="translation initiation factor eif-2b, domain 1"/>
    <property type="match status" value="1"/>
</dbReference>
<dbReference type="Gene3D" id="3.40.50.10470">
    <property type="entry name" value="Translation initiation factor eif-2b, domain 2"/>
    <property type="match status" value="1"/>
</dbReference>
<dbReference type="HAMAP" id="MF_01678">
    <property type="entry name" value="Salvage_MtnA"/>
    <property type="match status" value="1"/>
</dbReference>
<dbReference type="InterPro" id="IPR000649">
    <property type="entry name" value="IF-2B-related"/>
</dbReference>
<dbReference type="InterPro" id="IPR005251">
    <property type="entry name" value="IF-M1Pi"/>
</dbReference>
<dbReference type="InterPro" id="IPR042529">
    <property type="entry name" value="IF_2B-like_C"/>
</dbReference>
<dbReference type="InterPro" id="IPR011559">
    <property type="entry name" value="Initiation_fac_2B_a/b/d"/>
</dbReference>
<dbReference type="InterPro" id="IPR027363">
    <property type="entry name" value="M1Pi_N"/>
</dbReference>
<dbReference type="InterPro" id="IPR037171">
    <property type="entry name" value="NagB/RpiA_transferase-like"/>
</dbReference>
<dbReference type="NCBIfam" id="TIGR00524">
    <property type="entry name" value="eIF-2B_rel"/>
    <property type="match status" value="1"/>
</dbReference>
<dbReference type="NCBIfam" id="NF004326">
    <property type="entry name" value="PRK05720.1"/>
    <property type="match status" value="1"/>
</dbReference>
<dbReference type="NCBIfam" id="TIGR00512">
    <property type="entry name" value="salvage_mtnA"/>
    <property type="match status" value="1"/>
</dbReference>
<dbReference type="PANTHER" id="PTHR43475">
    <property type="entry name" value="METHYLTHIORIBOSE-1-PHOSPHATE ISOMERASE"/>
    <property type="match status" value="1"/>
</dbReference>
<dbReference type="PANTHER" id="PTHR43475:SF1">
    <property type="entry name" value="METHYLTHIORIBOSE-1-PHOSPHATE ISOMERASE"/>
    <property type="match status" value="1"/>
</dbReference>
<dbReference type="Pfam" id="PF01008">
    <property type="entry name" value="IF-2B"/>
    <property type="match status" value="1"/>
</dbReference>
<dbReference type="SUPFAM" id="SSF100950">
    <property type="entry name" value="NagB/RpiA/CoA transferase-like"/>
    <property type="match status" value="1"/>
</dbReference>
<accession>Q9UZ16</accession>
<accession>G8ZHE6</accession>
<feature type="chain" id="PRO_0000156088" description="Putative methylthioribose-1-phosphate isomerase">
    <location>
        <begin position="1"/>
        <end position="356"/>
    </location>
</feature>
<feature type="active site" description="Proton donor" evidence="1">
    <location>
        <position position="247"/>
    </location>
</feature>
<feature type="binding site" evidence="1">
    <location>
        <begin position="57"/>
        <end position="59"/>
    </location>
    <ligand>
        <name>substrate</name>
    </ligand>
</feature>
<feature type="binding site" evidence="1">
    <location>
        <position position="100"/>
    </location>
    <ligand>
        <name>substrate</name>
    </ligand>
</feature>
<feature type="binding site" evidence="1">
    <location>
        <position position="206"/>
    </location>
    <ligand>
        <name>substrate</name>
    </ligand>
</feature>
<feature type="binding site" evidence="1">
    <location>
        <begin position="257"/>
        <end position="258"/>
    </location>
    <ligand>
        <name>substrate</name>
    </ligand>
</feature>
<feature type="site" description="Transition state stabilizer" evidence="1">
    <location>
        <position position="167"/>
    </location>
</feature>
<proteinExistence type="inferred from homology"/>
<keyword id="KW-0028">Amino-acid biosynthesis</keyword>
<keyword id="KW-0413">Isomerase</keyword>
<keyword id="KW-0486">Methionine biosynthesis</keyword>
<gene>
    <name type="primary">aIF-2BI</name>
    <name type="ordered locus">PYRAB13410</name>
    <name type="ORF">PAB2444</name>
</gene>
<sequence>MEVRYKPEELTKLPRSVEYKERTVYMINQRLLPREFKVEAFRTVESVAEAIKNMTVRGAPAIGAAAAFGLALYAETSKAKSKDEFMDGFYKAYETLKNTRPTAVNLFWALNRIKKLVEEHLEDPLDEIKSLIVNEAQKIADEDVEANLRMGHYGAEVLPEGNLLTHCNAGSLATVHLGTVGAVVRVMHKDGSLKLLWLDETRPVLQGARLSAWEYSYDGLNVKLIADNAAAFVMQQGLVDAIIVGADRIVANGDFANKIGTYMLAVLAREHGIPFFAVAPLSSIDMSLKSGKEIPIEERSPEEVLTCGGCRIAPDVPVYNPAFDVTPHKYVTGIITDKRVVWPPFKRNLKKLFGEQ</sequence>
<evidence type="ECO:0000255" key="1">
    <source>
        <dbReference type="HAMAP-Rule" id="MF_01678"/>
    </source>
</evidence>
<evidence type="ECO:0000305" key="2"/>
<protein>
    <recommendedName>
        <fullName evidence="1">Putative methylthioribose-1-phosphate isomerase</fullName>
        <shortName evidence="1">M1Pi</shortName>
        <shortName evidence="1">MTR-1-P isomerase</shortName>
        <ecNumber evidence="1">5.3.1.23</ecNumber>
    </recommendedName>
    <alternativeName>
        <fullName evidence="1">MTNA-like protein</fullName>
        <shortName evidence="1">aMTNA</shortName>
    </alternativeName>
    <alternativeName>
        <fullName evidence="1">S-methyl-5-thioribose-1-phosphate isomerase</fullName>
    </alternativeName>
</protein>
<name>MTNA_PYRAB</name>
<comment type="function">
    <text evidence="1">Catalyzes the interconversion of methylthioribose-1-phosphate (MTR-1-P) into methylthioribulose-1-phosphate (MTRu-1-P).</text>
</comment>
<comment type="catalytic activity">
    <reaction evidence="1">
        <text>5-(methylsulfanyl)-alpha-D-ribose 1-phosphate = 5-(methylsulfanyl)-D-ribulose 1-phosphate</text>
        <dbReference type="Rhea" id="RHEA:19989"/>
        <dbReference type="ChEBI" id="CHEBI:58533"/>
        <dbReference type="ChEBI" id="CHEBI:58548"/>
        <dbReference type="EC" id="5.3.1.23"/>
    </reaction>
</comment>
<comment type="similarity">
    <text evidence="2">Belongs to the eIF-2B alpha/beta/delta subunits family. MtnA subfamily.</text>
</comment>
<organism>
    <name type="scientific">Pyrococcus abyssi (strain GE5 / Orsay)</name>
    <dbReference type="NCBI Taxonomy" id="272844"/>
    <lineage>
        <taxon>Archaea</taxon>
        <taxon>Methanobacteriati</taxon>
        <taxon>Methanobacteriota</taxon>
        <taxon>Thermococci</taxon>
        <taxon>Thermococcales</taxon>
        <taxon>Thermococcaceae</taxon>
        <taxon>Pyrococcus</taxon>
    </lineage>
</organism>
<reference key="1">
    <citation type="journal article" date="2003" name="Mol. Microbiol.">
        <title>An integrated analysis of the genome of the hyperthermophilic archaeon Pyrococcus abyssi.</title>
        <authorList>
            <person name="Cohen G.N."/>
            <person name="Barbe V."/>
            <person name="Flament D."/>
            <person name="Galperin M."/>
            <person name="Heilig R."/>
            <person name="Lecompte O."/>
            <person name="Poch O."/>
            <person name="Prieur D."/>
            <person name="Querellou J."/>
            <person name="Ripp R."/>
            <person name="Thierry J.-C."/>
            <person name="Van der Oost J."/>
            <person name="Weissenbach J."/>
            <person name="Zivanovic Y."/>
            <person name="Forterre P."/>
        </authorList>
    </citation>
    <scope>NUCLEOTIDE SEQUENCE [LARGE SCALE GENOMIC DNA]</scope>
    <source>
        <strain>GE5 / Orsay</strain>
    </source>
</reference>
<reference key="2">
    <citation type="journal article" date="2012" name="Curr. Microbiol.">
        <title>Re-annotation of two hyperthermophilic archaea Pyrococcus abyssi GE5 and Pyrococcus furiosus DSM 3638.</title>
        <authorList>
            <person name="Gao J."/>
            <person name="Wang J."/>
        </authorList>
    </citation>
    <scope>GENOME REANNOTATION</scope>
    <source>
        <strain>GE5 / Orsay</strain>
    </source>
</reference>